<proteinExistence type="evidence at protein level"/>
<dbReference type="SMR" id="P83745"/>
<dbReference type="ArachnoServer" id="AS000229">
    <property type="toxin name" value="kappa-theraphotoxin-Tb1a"/>
</dbReference>
<dbReference type="GO" id="GO:0005576">
    <property type="term" value="C:extracellular region"/>
    <property type="evidence" value="ECO:0007669"/>
    <property type="project" value="UniProtKB-SubCell"/>
</dbReference>
<dbReference type="GO" id="GO:0008200">
    <property type="term" value="F:ion channel inhibitor activity"/>
    <property type="evidence" value="ECO:0007669"/>
    <property type="project" value="InterPro"/>
</dbReference>
<dbReference type="GO" id="GO:0015459">
    <property type="term" value="F:potassium channel regulator activity"/>
    <property type="evidence" value="ECO:0007669"/>
    <property type="project" value="UniProtKB-KW"/>
</dbReference>
<dbReference type="GO" id="GO:0090729">
    <property type="term" value="F:toxin activity"/>
    <property type="evidence" value="ECO:0007669"/>
    <property type="project" value="UniProtKB-KW"/>
</dbReference>
<dbReference type="InterPro" id="IPR011696">
    <property type="entry name" value="Huwentoxin-1"/>
</dbReference>
<dbReference type="Pfam" id="PF07740">
    <property type="entry name" value="Toxin_12"/>
    <property type="match status" value="1"/>
</dbReference>
<dbReference type="SUPFAM" id="SSF57059">
    <property type="entry name" value="omega toxin-like"/>
    <property type="match status" value="1"/>
</dbReference>
<comment type="function">
    <text evidence="3 4">Blocks Kv4.2/KCND2 voltage-gated potassium channels (IC(50) is 193.0 nM) by shifting the voltage-dependence of channel activation to more depolarized potentials. The toxin is thought to bind to the S3-S4 linker region of the voltage sensor domain.</text>
</comment>
<comment type="subunit">
    <text evidence="7">Monomer.</text>
</comment>
<comment type="subcellular location">
    <subcellularLocation>
        <location evidence="7">Secreted</location>
    </subcellularLocation>
</comment>
<comment type="tissue specificity">
    <text evidence="7">Expressed by the venom gland.</text>
</comment>
<comment type="domain">
    <text evidence="1">The presence of a 'disulfide through disulfide knot' structurally defines this protein as a knottin.</text>
</comment>
<comment type="mass spectrometry"/>
<comment type="mass spectrometry">
    <text>Monoisotopic mass.</text>
</comment>
<comment type="similarity">
    <text evidence="7">Belongs to the neurotoxin 10 (Hwtx-1) family. 59 (Tltx) subfamily.</text>
</comment>
<sequence>AACLGMFESCDPNNDKCCPNRECNRKHKWCKYKLW</sequence>
<feature type="peptide" id="PRO_0000045026" description="Kappa-theraphotoxin-Tb1a">
    <location>
        <begin position="1"/>
        <end position="35"/>
    </location>
</feature>
<feature type="disulfide bond" evidence="2">
    <location>
        <begin position="3"/>
        <end position="18"/>
    </location>
</feature>
<feature type="disulfide bond" evidence="2">
    <location>
        <begin position="10"/>
        <end position="23"/>
    </location>
</feature>
<feature type="disulfide bond" evidence="2">
    <location>
        <begin position="17"/>
        <end position="30"/>
    </location>
</feature>
<reference key="1">
    <citation type="journal article" date="2004" name="Rapid Commun. Mass Spectrom.">
        <title>Nanospray analysis of the venom of the tarantula Theraphosa leblondi: a powerful method for direct venom mass fingerprinting and toxin sequencing.</title>
        <authorList>
            <person name="Legros C."/>
            <person name="Celerier M.-L."/>
            <person name="Henry M."/>
            <person name="Guette C."/>
        </authorList>
    </citation>
    <scope>PROTEIN SEQUENCE</scope>
    <scope>FUNCTION</scope>
    <scope>MASS SPECTROMETRY</scope>
    <source>
        <tissue>Venom</tissue>
    </source>
</reference>
<reference key="2">
    <citation type="journal article" date="2004" name="Toxicon">
        <title>Modulation of Kv4.2 channels by a peptide isolated from the venom of the giant bird-eating tarantula Theraphosa leblondi.</title>
        <authorList>
            <person name="Ebbinghaus J."/>
            <person name="Legros C."/>
            <person name="Nolting A."/>
            <person name="Guette C."/>
            <person name="Celerier M.L."/>
            <person name="Pongs O."/>
            <person name="Bahring R."/>
        </authorList>
    </citation>
    <scope>FUNCTION</scope>
    <scope>MASS SPECTROMETRY</scope>
    <source>
        <tissue>Venom</tissue>
    </source>
</reference>
<accession>P83745</accession>
<organism>
    <name type="scientific">Theraphosa blondi</name>
    <name type="common">Goliath birdeating spider</name>
    <dbReference type="NCBI Taxonomy" id="260533"/>
    <lineage>
        <taxon>Eukaryota</taxon>
        <taxon>Metazoa</taxon>
        <taxon>Ecdysozoa</taxon>
        <taxon>Arthropoda</taxon>
        <taxon>Chelicerata</taxon>
        <taxon>Arachnida</taxon>
        <taxon>Araneae</taxon>
        <taxon>Mygalomorphae</taxon>
        <taxon>Theraphosidae</taxon>
        <taxon>Theraphosa</taxon>
    </lineage>
</organism>
<keyword id="KW-0903">Direct protein sequencing</keyword>
<keyword id="KW-1015">Disulfide bond</keyword>
<keyword id="KW-0872">Ion channel impairing toxin</keyword>
<keyword id="KW-0960">Knottin</keyword>
<keyword id="KW-0528">Neurotoxin</keyword>
<keyword id="KW-0632">Potassium channel impairing toxin</keyword>
<keyword id="KW-0964">Secreted</keyword>
<keyword id="KW-0800">Toxin</keyword>
<keyword id="KW-1220">Voltage-gated potassium channel impairing toxin</keyword>
<protein>
    <recommendedName>
        <fullName>Kappa-theraphotoxin-Tb1a</fullName>
        <shortName>Kappa-TRTX-Tb1a</shortName>
    </recommendedName>
    <alternativeName>
        <fullName>Theraphotoxin-1</fullName>
    </alternativeName>
    <alternativeName>
        <fullName evidence="5 6">TlTx1</fullName>
    </alternativeName>
</protein>
<name>TX1_THEBL</name>
<evidence type="ECO:0000250" key="1"/>
<evidence type="ECO:0000250" key="2">
    <source>
        <dbReference type="UniProtKB" id="P58426"/>
    </source>
</evidence>
<evidence type="ECO:0000269" key="3">
    <source>
    </source>
</evidence>
<evidence type="ECO:0000269" key="4">
    <source>
    </source>
</evidence>
<evidence type="ECO:0000303" key="5">
    <source>
    </source>
</evidence>
<evidence type="ECO:0000303" key="6">
    <source>
    </source>
</evidence>
<evidence type="ECO:0000305" key="7"/>